<proteinExistence type="inferred from homology"/>
<organism>
    <name type="scientific">Photobacterium profundum (strain SS9)</name>
    <dbReference type="NCBI Taxonomy" id="298386"/>
    <lineage>
        <taxon>Bacteria</taxon>
        <taxon>Pseudomonadati</taxon>
        <taxon>Pseudomonadota</taxon>
        <taxon>Gammaproteobacteria</taxon>
        <taxon>Vibrionales</taxon>
        <taxon>Vibrionaceae</taxon>
        <taxon>Photobacterium</taxon>
    </lineage>
</organism>
<reference key="1">
    <citation type="journal article" date="2005" name="Science">
        <title>Life at depth: Photobacterium profundum genome sequence and expression analysis.</title>
        <authorList>
            <person name="Vezzi A."/>
            <person name="Campanaro S."/>
            <person name="D'Angelo M."/>
            <person name="Simonato F."/>
            <person name="Vitulo N."/>
            <person name="Lauro F.M."/>
            <person name="Cestaro A."/>
            <person name="Malacrida G."/>
            <person name="Simionati B."/>
            <person name="Cannata N."/>
            <person name="Romualdi C."/>
            <person name="Bartlett D.H."/>
            <person name="Valle G."/>
        </authorList>
    </citation>
    <scope>NUCLEOTIDE SEQUENCE [LARGE SCALE GENOMIC DNA]</scope>
    <source>
        <strain>ATCC BAA-1253 / SS9</strain>
    </source>
</reference>
<dbReference type="EC" id="2.7.2.3" evidence="1"/>
<dbReference type="EMBL" id="CR378673">
    <property type="protein sequence ID" value="CAG21446.1"/>
    <property type="molecule type" value="Genomic_DNA"/>
</dbReference>
<dbReference type="SMR" id="P62418"/>
<dbReference type="STRING" id="298386.PBPRA3131"/>
<dbReference type="KEGG" id="ppr:PBPRA3131"/>
<dbReference type="eggNOG" id="COG0126">
    <property type="taxonomic scope" value="Bacteria"/>
</dbReference>
<dbReference type="HOGENOM" id="CLU_025427_0_2_6"/>
<dbReference type="UniPathway" id="UPA00109">
    <property type="reaction ID" value="UER00185"/>
</dbReference>
<dbReference type="Proteomes" id="UP000000593">
    <property type="component" value="Chromosome 1"/>
</dbReference>
<dbReference type="GO" id="GO:0005829">
    <property type="term" value="C:cytosol"/>
    <property type="evidence" value="ECO:0007669"/>
    <property type="project" value="TreeGrafter"/>
</dbReference>
<dbReference type="GO" id="GO:0043531">
    <property type="term" value="F:ADP binding"/>
    <property type="evidence" value="ECO:0007669"/>
    <property type="project" value="TreeGrafter"/>
</dbReference>
<dbReference type="GO" id="GO:0005524">
    <property type="term" value="F:ATP binding"/>
    <property type="evidence" value="ECO:0007669"/>
    <property type="project" value="UniProtKB-KW"/>
</dbReference>
<dbReference type="GO" id="GO:0004618">
    <property type="term" value="F:phosphoglycerate kinase activity"/>
    <property type="evidence" value="ECO:0007669"/>
    <property type="project" value="UniProtKB-UniRule"/>
</dbReference>
<dbReference type="GO" id="GO:0006094">
    <property type="term" value="P:gluconeogenesis"/>
    <property type="evidence" value="ECO:0007669"/>
    <property type="project" value="TreeGrafter"/>
</dbReference>
<dbReference type="GO" id="GO:0006096">
    <property type="term" value="P:glycolytic process"/>
    <property type="evidence" value="ECO:0007669"/>
    <property type="project" value="UniProtKB-UniRule"/>
</dbReference>
<dbReference type="FunFam" id="3.40.50.1260:FF:000001">
    <property type="entry name" value="Phosphoglycerate kinase"/>
    <property type="match status" value="1"/>
</dbReference>
<dbReference type="FunFam" id="3.40.50.1260:FF:000002">
    <property type="entry name" value="Phosphoglycerate kinase"/>
    <property type="match status" value="1"/>
</dbReference>
<dbReference type="Gene3D" id="3.40.50.1260">
    <property type="entry name" value="Phosphoglycerate kinase, N-terminal domain"/>
    <property type="match status" value="2"/>
</dbReference>
<dbReference type="HAMAP" id="MF_00145">
    <property type="entry name" value="Phosphoglyc_kinase"/>
    <property type="match status" value="1"/>
</dbReference>
<dbReference type="InterPro" id="IPR001576">
    <property type="entry name" value="Phosphoglycerate_kinase"/>
</dbReference>
<dbReference type="InterPro" id="IPR015911">
    <property type="entry name" value="Phosphoglycerate_kinase_CS"/>
</dbReference>
<dbReference type="InterPro" id="IPR015824">
    <property type="entry name" value="Phosphoglycerate_kinase_N"/>
</dbReference>
<dbReference type="InterPro" id="IPR036043">
    <property type="entry name" value="Phosphoglycerate_kinase_sf"/>
</dbReference>
<dbReference type="PANTHER" id="PTHR11406">
    <property type="entry name" value="PHOSPHOGLYCERATE KINASE"/>
    <property type="match status" value="1"/>
</dbReference>
<dbReference type="PANTHER" id="PTHR11406:SF23">
    <property type="entry name" value="PHOSPHOGLYCERATE KINASE 1, CHLOROPLASTIC-RELATED"/>
    <property type="match status" value="1"/>
</dbReference>
<dbReference type="Pfam" id="PF00162">
    <property type="entry name" value="PGK"/>
    <property type="match status" value="1"/>
</dbReference>
<dbReference type="PIRSF" id="PIRSF000724">
    <property type="entry name" value="Pgk"/>
    <property type="match status" value="1"/>
</dbReference>
<dbReference type="PRINTS" id="PR00477">
    <property type="entry name" value="PHGLYCKINASE"/>
</dbReference>
<dbReference type="SUPFAM" id="SSF53748">
    <property type="entry name" value="Phosphoglycerate kinase"/>
    <property type="match status" value="1"/>
</dbReference>
<dbReference type="PROSITE" id="PS00111">
    <property type="entry name" value="PGLYCERATE_KINASE"/>
    <property type="match status" value="1"/>
</dbReference>
<evidence type="ECO:0000255" key="1">
    <source>
        <dbReference type="HAMAP-Rule" id="MF_00145"/>
    </source>
</evidence>
<protein>
    <recommendedName>
        <fullName evidence="1">Phosphoglycerate kinase</fullName>
        <ecNumber evidence="1">2.7.2.3</ecNumber>
    </recommendedName>
</protein>
<keyword id="KW-0067">ATP-binding</keyword>
<keyword id="KW-0963">Cytoplasm</keyword>
<keyword id="KW-0324">Glycolysis</keyword>
<keyword id="KW-0418">Kinase</keyword>
<keyword id="KW-0547">Nucleotide-binding</keyword>
<keyword id="KW-1185">Reference proteome</keyword>
<keyword id="KW-0808">Transferase</keyword>
<comment type="catalytic activity">
    <reaction evidence="1">
        <text>(2R)-3-phosphoglycerate + ATP = (2R)-3-phospho-glyceroyl phosphate + ADP</text>
        <dbReference type="Rhea" id="RHEA:14801"/>
        <dbReference type="ChEBI" id="CHEBI:30616"/>
        <dbReference type="ChEBI" id="CHEBI:57604"/>
        <dbReference type="ChEBI" id="CHEBI:58272"/>
        <dbReference type="ChEBI" id="CHEBI:456216"/>
        <dbReference type="EC" id="2.7.2.3"/>
    </reaction>
</comment>
<comment type="pathway">
    <text evidence="1">Carbohydrate degradation; glycolysis; pyruvate from D-glyceraldehyde 3-phosphate: step 2/5.</text>
</comment>
<comment type="subunit">
    <text evidence="1">Monomer.</text>
</comment>
<comment type="subcellular location">
    <subcellularLocation>
        <location evidence="1">Cytoplasm</location>
    </subcellularLocation>
</comment>
<comment type="similarity">
    <text evidence="1">Belongs to the phosphoglycerate kinase family.</text>
</comment>
<sequence>MRGRTMSVIKMTDLELAGKRVFIRADLNVPVKDGKVTSDARILASLPTIKRCLEAGAKVMVTSHLGRPTEGEYNEEFSLAPVVNYLNDALDCDVKLAKDYLDGIELNAGELVVLENVRFNKGEKKNDEALSKKYAALCDIFVMDAFGTAHRAQASTHGVGMNAAIACAGPLLANELEALGKAMDNPARPLVAIVGGSKVSTKLTVLESLSKIADQLVVGGGIANTFIAAEGHNVGKSLYEADLVETAKKLMKDCAIPVATDVACAKAFDENAEAVIKHVSEVQDDDMIFDLGPDSTAVLAEIISNAKTILWNGPVGVFEFKNFEAGTAGIAKAIADSEGFSVAGGGDTLAAIDKFGIKADVSYISTGGGAFLEFVEGKVLPAVAMLEERAKA</sequence>
<accession>P62418</accession>
<feature type="chain" id="PRO_0000145983" description="Phosphoglycerate kinase">
    <location>
        <begin position="1"/>
        <end position="392"/>
    </location>
</feature>
<feature type="binding site" evidence="1">
    <location>
        <begin position="26"/>
        <end position="28"/>
    </location>
    <ligand>
        <name>substrate</name>
    </ligand>
</feature>
<feature type="binding site" evidence="1">
    <location>
        <position position="41"/>
    </location>
    <ligand>
        <name>substrate</name>
    </ligand>
</feature>
<feature type="binding site" evidence="1">
    <location>
        <begin position="64"/>
        <end position="67"/>
    </location>
    <ligand>
        <name>substrate</name>
    </ligand>
</feature>
<feature type="binding site" evidence="1">
    <location>
        <position position="118"/>
    </location>
    <ligand>
        <name>substrate</name>
    </ligand>
</feature>
<feature type="binding site" evidence="1">
    <location>
        <position position="151"/>
    </location>
    <ligand>
        <name>substrate</name>
    </ligand>
</feature>
<feature type="binding site" evidence="1">
    <location>
        <position position="202"/>
    </location>
    <ligand>
        <name>ATP</name>
        <dbReference type="ChEBI" id="CHEBI:30616"/>
    </ligand>
</feature>
<feature type="binding site" evidence="1">
    <location>
        <position position="319"/>
    </location>
    <ligand>
        <name>ATP</name>
        <dbReference type="ChEBI" id="CHEBI:30616"/>
    </ligand>
</feature>
<feature type="binding site" evidence="1">
    <location>
        <begin position="345"/>
        <end position="348"/>
    </location>
    <ligand>
        <name>ATP</name>
        <dbReference type="ChEBI" id="CHEBI:30616"/>
    </ligand>
</feature>
<gene>
    <name evidence="1" type="primary">pgk</name>
    <name type="ordered locus">PBPRA3131</name>
</gene>
<name>PGK_PHOPR</name>